<organism>
    <name type="scientific">Streptococcus agalactiae serotype III (strain NEM316)</name>
    <dbReference type="NCBI Taxonomy" id="211110"/>
    <lineage>
        <taxon>Bacteria</taxon>
        <taxon>Bacillati</taxon>
        <taxon>Bacillota</taxon>
        <taxon>Bacilli</taxon>
        <taxon>Lactobacillales</taxon>
        <taxon>Streptococcaceae</taxon>
        <taxon>Streptococcus</taxon>
    </lineage>
</organism>
<comment type="catalytic activity">
    <reaction evidence="1">
        <text>tRNA(Phe) + L-phenylalanine + ATP = L-phenylalanyl-tRNA(Phe) + AMP + diphosphate + H(+)</text>
        <dbReference type="Rhea" id="RHEA:19413"/>
        <dbReference type="Rhea" id="RHEA-COMP:9668"/>
        <dbReference type="Rhea" id="RHEA-COMP:9699"/>
        <dbReference type="ChEBI" id="CHEBI:15378"/>
        <dbReference type="ChEBI" id="CHEBI:30616"/>
        <dbReference type="ChEBI" id="CHEBI:33019"/>
        <dbReference type="ChEBI" id="CHEBI:58095"/>
        <dbReference type="ChEBI" id="CHEBI:78442"/>
        <dbReference type="ChEBI" id="CHEBI:78531"/>
        <dbReference type="ChEBI" id="CHEBI:456215"/>
        <dbReference type="EC" id="6.1.1.20"/>
    </reaction>
</comment>
<comment type="cofactor">
    <cofactor evidence="1">
        <name>Mg(2+)</name>
        <dbReference type="ChEBI" id="CHEBI:18420"/>
    </cofactor>
    <text evidence="1">Binds 2 magnesium ions per tetramer.</text>
</comment>
<comment type="subunit">
    <text evidence="1">Tetramer of two alpha and two beta subunits.</text>
</comment>
<comment type="subcellular location">
    <subcellularLocation>
        <location evidence="1">Cytoplasm</location>
    </subcellularLocation>
</comment>
<comment type="similarity">
    <text evidence="1">Belongs to the class-II aminoacyl-tRNA synthetase family. Phe-tRNA synthetase alpha subunit type 1 subfamily.</text>
</comment>
<keyword id="KW-0030">Aminoacyl-tRNA synthetase</keyword>
<keyword id="KW-0067">ATP-binding</keyword>
<keyword id="KW-0963">Cytoplasm</keyword>
<keyword id="KW-0436">Ligase</keyword>
<keyword id="KW-0460">Magnesium</keyword>
<keyword id="KW-0479">Metal-binding</keyword>
<keyword id="KW-0547">Nucleotide-binding</keyword>
<keyword id="KW-0648">Protein biosynthesis</keyword>
<protein>
    <recommendedName>
        <fullName evidence="1">Phenylalanine--tRNA ligase alpha subunit</fullName>
        <ecNumber evidence="1">6.1.1.20</ecNumber>
    </recommendedName>
    <alternativeName>
        <fullName evidence="1">Phenylalanyl-tRNA synthetase alpha subunit</fullName>
        <shortName evidence="1">PheRS</shortName>
    </alternativeName>
</protein>
<sequence>MDLQKQLEELKISTQEKLKEMTGNHTKELQDLRVQVLGKKGSLTELLKGLKDLSNDLRPVVGKQVNEVRDILTKAFEEQAKVVEAAKIQAQLESESVDVTLPGRQMTLGHRHVLTQTSEEIEDIFLGMGFQVVGGFEVEKDYYNFERMNLPKDHPARDMQDTFYITEEILLRTHTSPVQARTMDQHDFSKGPLKMISPGRVFRRDTDDATHSHQFHQIEGLVVGENISMGDLKGTLQLISQKMFGAERKIRLRPSYFPFTEPSVEVDVSCFKCGGKGCNVCKQTGWIEILGAGMVHPSVLEMSGIDSEKYSGFAFGLGQERIAMLRYGINDIRGFYQGDVRFTDQF</sequence>
<evidence type="ECO:0000255" key="1">
    <source>
        <dbReference type="HAMAP-Rule" id="MF_00281"/>
    </source>
</evidence>
<feature type="chain" id="PRO_0000126768" description="Phenylalanine--tRNA ligase alpha subunit">
    <location>
        <begin position="1"/>
        <end position="346"/>
    </location>
</feature>
<feature type="binding site" evidence="1">
    <location>
        <position position="261"/>
    </location>
    <ligand>
        <name>Mg(2+)</name>
        <dbReference type="ChEBI" id="CHEBI:18420"/>
        <note>shared with beta subunit</note>
    </ligand>
</feature>
<accession>Q8E5U3</accession>
<gene>
    <name evidence="1" type="primary">pheS</name>
    <name type="ordered locus">gbs0886</name>
</gene>
<proteinExistence type="inferred from homology"/>
<name>SYFA_STRA3</name>
<reference key="1">
    <citation type="journal article" date="2002" name="Mol. Microbiol.">
        <title>Genome sequence of Streptococcus agalactiae, a pathogen causing invasive neonatal disease.</title>
        <authorList>
            <person name="Glaser P."/>
            <person name="Rusniok C."/>
            <person name="Buchrieser C."/>
            <person name="Chevalier F."/>
            <person name="Frangeul L."/>
            <person name="Msadek T."/>
            <person name="Zouine M."/>
            <person name="Couve E."/>
            <person name="Lalioui L."/>
            <person name="Poyart C."/>
            <person name="Trieu-Cuot P."/>
            <person name="Kunst F."/>
        </authorList>
    </citation>
    <scope>NUCLEOTIDE SEQUENCE [LARGE SCALE GENOMIC DNA]</scope>
    <source>
        <strain>NEM316</strain>
    </source>
</reference>
<dbReference type="EC" id="6.1.1.20" evidence="1"/>
<dbReference type="EMBL" id="AL766847">
    <property type="protein sequence ID" value="CAD46530.1"/>
    <property type="molecule type" value="Genomic_DNA"/>
</dbReference>
<dbReference type="RefSeq" id="WP_000365658.1">
    <property type="nucleotide sequence ID" value="NC_004368.1"/>
</dbReference>
<dbReference type="SMR" id="Q8E5U3"/>
<dbReference type="KEGG" id="san:pheS"/>
<dbReference type="eggNOG" id="COG0016">
    <property type="taxonomic scope" value="Bacteria"/>
</dbReference>
<dbReference type="HOGENOM" id="CLU_025086_0_1_9"/>
<dbReference type="Proteomes" id="UP000000823">
    <property type="component" value="Chromosome"/>
</dbReference>
<dbReference type="GO" id="GO:0005737">
    <property type="term" value="C:cytoplasm"/>
    <property type="evidence" value="ECO:0007669"/>
    <property type="project" value="UniProtKB-SubCell"/>
</dbReference>
<dbReference type="GO" id="GO:0005524">
    <property type="term" value="F:ATP binding"/>
    <property type="evidence" value="ECO:0007669"/>
    <property type="project" value="UniProtKB-UniRule"/>
</dbReference>
<dbReference type="GO" id="GO:0140096">
    <property type="term" value="F:catalytic activity, acting on a protein"/>
    <property type="evidence" value="ECO:0007669"/>
    <property type="project" value="UniProtKB-ARBA"/>
</dbReference>
<dbReference type="GO" id="GO:0000287">
    <property type="term" value="F:magnesium ion binding"/>
    <property type="evidence" value="ECO:0007669"/>
    <property type="project" value="UniProtKB-UniRule"/>
</dbReference>
<dbReference type="GO" id="GO:0004826">
    <property type="term" value="F:phenylalanine-tRNA ligase activity"/>
    <property type="evidence" value="ECO:0007669"/>
    <property type="project" value="UniProtKB-UniRule"/>
</dbReference>
<dbReference type="GO" id="GO:0016740">
    <property type="term" value="F:transferase activity"/>
    <property type="evidence" value="ECO:0007669"/>
    <property type="project" value="UniProtKB-ARBA"/>
</dbReference>
<dbReference type="GO" id="GO:0000049">
    <property type="term" value="F:tRNA binding"/>
    <property type="evidence" value="ECO:0007669"/>
    <property type="project" value="InterPro"/>
</dbReference>
<dbReference type="GO" id="GO:0006432">
    <property type="term" value="P:phenylalanyl-tRNA aminoacylation"/>
    <property type="evidence" value="ECO:0007669"/>
    <property type="project" value="UniProtKB-UniRule"/>
</dbReference>
<dbReference type="CDD" id="cd00496">
    <property type="entry name" value="PheRS_alpha_core"/>
    <property type="match status" value="1"/>
</dbReference>
<dbReference type="FunFam" id="3.30.930.10:FF:000003">
    <property type="entry name" value="Phenylalanine--tRNA ligase alpha subunit"/>
    <property type="match status" value="1"/>
</dbReference>
<dbReference type="Gene3D" id="3.30.930.10">
    <property type="entry name" value="Bira Bifunctional Protein, Domain 2"/>
    <property type="match status" value="1"/>
</dbReference>
<dbReference type="HAMAP" id="MF_00281">
    <property type="entry name" value="Phe_tRNA_synth_alpha1"/>
    <property type="match status" value="1"/>
</dbReference>
<dbReference type="InterPro" id="IPR006195">
    <property type="entry name" value="aa-tRNA-synth_II"/>
</dbReference>
<dbReference type="InterPro" id="IPR045864">
    <property type="entry name" value="aa-tRNA-synth_II/BPL/LPL"/>
</dbReference>
<dbReference type="InterPro" id="IPR004529">
    <property type="entry name" value="Phe-tRNA-synth_IIc_asu"/>
</dbReference>
<dbReference type="InterPro" id="IPR004188">
    <property type="entry name" value="Phe-tRNA_ligase_II_N"/>
</dbReference>
<dbReference type="InterPro" id="IPR022911">
    <property type="entry name" value="Phe_tRNA_ligase_alpha1_bac"/>
</dbReference>
<dbReference type="InterPro" id="IPR002319">
    <property type="entry name" value="Phenylalanyl-tRNA_Synthase"/>
</dbReference>
<dbReference type="InterPro" id="IPR010978">
    <property type="entry name" value="tRNA-bd_arm"/>
</dbReference>
<dbReference type="NCBIfam" id="TIGR00468">
    <property type="entry name" value="pheS"/>
    <property type="match status" value="1"/>
</dbReference>
<dbReference type="PANTHER" id="PTHR11538:SF41">
    <property type="entry name" value="PHENYLALANINE--TRNA LIGASE, MITOCHONDRIAL"/>
    <property type="match status" value="1"/>
</dbReference>
<dbReference type="PANTHER" id="PTHR11538">
    <property type="entry name" value="PHENYLALANYL-TRNA SYNTHETASE"/>
    <property type="match status" value="1"/>
</dbReference>
<dbReference type="Pfam" id="PF02912">
    <property type="entry name" value="Phe_tRNA-synt_N"/>
    <property type="match status" value="1"/>
</dbReference>
<dbReference type="Pfam" id="PF01409">
    <property type="entry name" value="tRNA-synt_2d"/>
    <property type="match status" value="1"/>
</dbReference>
<dbReference type="SUPFAM" id="SSF55681">
    <property type="entry name" value="Class II aaRS and biotin synthetases"/>
    <property type="match status" value="1"/>
</dbReference>
<dbReference type="SUPFAM" id="SSF46589">
    <property type="entry name" value="tRNA-binding arm"/>
    <property type="match status" value="1"/>
</dbReference>
<dbReference type="PROSITE" id="PS50862">
    <property type="entry name" value="AA_TRNA_LIGASE_II"/>
    <property type="match status" value="1"/>
</dbReference>